<keyword id="KW-1185">Reference proteome</keyword>
<keyword id="KW-0687">Ribonucleoprotein</keyword>
<keyword id="KW-0689">Ribosomal protein</keyword>
<keyword id="KW-0694">RNA-binding</keyword>
<keyword id="KW-0699">rRNA-binding</keyword>
<gene>
    <name evidence="1" type="primary">rplF</name>
    <name type="ordered locus">DIP0525</name>
</gene>
<sequence length="178" mass="19339">MSRVGKAPIAIPSGVDVKIDGQHVEVKGPKGTLDLTIPEPIVASIEDGQISVVRPDDHRKNRSLHGLSRSLVNNMVVGVTEGYTIKMEIFGVGYRVALKGKNLEFSLGYSHPVLIEAPEGITFAVDGNTKLSVSGIDKQKVGQIAAIIRRLRKDDPYKGKGIRYEGEQIRRKVGKTGK</sequence>
<dbReference type="EMBL" id="BX248355">
    <property type="protein sequence ID" value="CAE49036.1"/>
    <property type="molecule type" value="Genomic_DNA"/>
</dbReference>
<dbReference type="RefSeq" id="WP_004566822.1">
    <property type="nucleotide sequence ID" value="NC_002935.2"/>
</dbReference>
<dbReference type="SMR" id="Q6NJ87"/>
<dbReference type="STRING" id="257309.DIP0525"/>
<dbReference type="GeneID" id="29422980"/>
<dbReference type="KEGG" id="cdi:DIP0525"/>
<dbReference type="HOGENOM" id="CLU_065464_1_2_11"/>
<dbReference type="Proteomes" id="UP000002198">
    <property type="component" value="Chromosome"/>
</dbReference>
<dbReference type="GO" id="GO:0022625">
    <property type="term" value="C:cytosolic large ribosomal subunit"/>
    <property type="evidence" value="ECO:0007669"/>
    <property type="project" value="TreeGrafter"/>
</dbReference>
<dbReference type="GO" id="GO:0019843">
    <property type="term" value="F:rRNA binding"/>
    <property type="evidence" value="ECO:0007669"/>
    <property type="project" value="UniProtKB-UniRule"/>
</dbReference>
<dbReference type="GO" id="GO:0003735">
    <property type="term" value="F:structural constituent of ribosome"/>
    <property type="evidence" value="ECO:0007669"/>
    <property type="project" value="InterPro"/>
</dbReference>
<dbReference type="GO" id="GO:0002181">
    <property type="term" value="P:cytoplasmic translation"/>
    <property type="evidence" value="ECO:0007669"/>
    <property type="project" value="TreeGrafter"/>
</dbReference>
<dbReference type="FunFam" id="3.90.930.12:FF:000001">
    <property type="entry name" value="50S ribosomal protein L6"/>
    <property type="match status" value="1"/>
</dbReference>
<dbReference type="FunFam" id="3.90.930.12:FF:000002">
    <property type="entry name" value="50S ribosomal protein L6"/>
    <property type="match status" value="1"/>
</dbReference>
<dbReference type="Gene3D" id="3.90.930.12">
    <property type="entry name" value="Ribosomal protein L6, alpha-beta domain"/>
    <property type="match status" value="2"/>
</dbReference>
<dbReference type="HAMAP" id="MF_01365_B">
    <property type="entry name" value="Ribosomal_uL6_B"/>
    <property type="match status" value="1"/>
</dbReference>
<dbReference type="InterPro" id="IPR000702">
    <property type="entry name" value="Ribosomal_uL6-like"/>
</dbReference>
<dbReference type="InterPro" id="IPR036789">
    <property type="entry name" value="Ribosomal_uL6-like_a/b-dom_sf"/>
</dbReference>
<dbReference type="InterPro" id="IPR020040">
    <property type="entry name" value="Ribosomal_uL6_a/b-dom"/>
</dbReference>
<dbReference type="InterPro" id="IPR019906">
    <property type="entry name" value="Ribosomal_uL6_bac-type"/>
</dbReference>
<dbReference type="NCBIfam" id="TIGR03654">
    <property type="entry name" value="L6_bact"/>
    <property type="match status" value="1"/>
</dbReference>
<dbReference type="PANTHER" id="PTHR11655">
    <property type="entry name" value="60S/50S RIBOSOMAL PROTEIN L6/L9"/>
    <property type="match status" value="1"/>
</dbReference>
<dbReference type="PANTHER" id="PTHR11655:SF14">
    <property type="entry name" value="LARGE RIBOSOMAL SUBUNIT PROTEIN UL6M"/>
    <property type="match status" value="1"/>
</dbReference>
<dbReference type="Pfam" id="PF00347">
    <property type="entry name" value="Ribosomal_L6"/>
    <property type="match status" value="2"/>
</dbReference>
<dbReference type="PIRSF" id="PIRSF002162">
    <property type="entry name" value="Ribosomal_L6"/>
    <property type="match status" value="1"/>
</dbReference>
<dbReference type="PRINTS" id="PR00059">
    <property type="entry name" value="RIBOSOMALL6"/>
</dbReference>
<dbReference type="SUPFAM" id="SSF56053">
    <property type="entry name" value="Ribosomal protein L6"/>
    <property type="match status" value="2"/>
</dbReference>
<feature type="chain" id="PRO_0000260855" description="Large ribosomal subunit protein uL6">
    <location>
        <begin position="1"/>
        <end position="178"/>
    </location>
</feature>
<evidence type="ECO:0000255" key="1">
    <source>
        <dbReference type="HAMAP-Rule" id="MF_01365"/>
    </source>
</evidence>
<evidence type="ECO:0000305" key="2"/>
<comment type="function">
    <text evidence="1">This protein binds to the 23S rRNA, and is important in its secondary structure. It is located near the subunit interface in the base of the L7/L12 stalk, and near the tRNA binding site of the peptidyltransferase center.</text>
</comment>
<comment type="subunit">
    <text evidence="1">Part of the 50S ribosomal subunit.</text>
</comment>
<comment type="similarity">
    <text evidence="1">Belongs to the universal ribosomal protein uL6 family.</text>
</comment>
<reference key="1">
    <citation type="journal article" date="2003" name="Nucleic Acids Res.">
        <title>The complete genome sequence and analysis of Corynebacterium diphtheriae NCTC13129.</title>
        <authorList>
            <person name="Cerdeno-Tarraga A.-M."/>
            <person name="Efstratiou A."/>
            <person name="Dover L.G."/>
            <person name="Holden M.T.G."/>
            <person name="Pallen M.J."/>
            <person name="Bentley S.D."/>
            <person name="Besra G.S."/>
            <person name="Churcher C.M."/>
            <person name="James K.D."/>
            <person name="De Zoysa A."/>
            <person name="Chillingworth T."/>
            <person name="Cronin A."/>
            <person name="Dowd L."/>
            <person name="Feltwell T."/>
            <person name="Hamlin N."/>
            <person name="Holroyd S."/>
            <person name="Jagels K."/>
            <person name="Moule S."/>
            <person name="Quail M.A."/>
            <person name="Rabbinowitsch E."/>
            <person name="Rutherford K.M."/>
            <person name="Thomson N.R."/>
            <person name="Unwin L."/>
            <person name="Whitehead S."/>
            <person name="Barrell B.G."/>
            <person name="Parkhill J."/>
        </authorList>
    </citation>
    <scope>NUCLEOTIDE SEQUENCE [LARGE SCALE GENOMIC DNA]</scope>
    <source>
        <strain>ATCC 700971 / NCTC 13129 / Biotype gravis</strain>
    </source>
</reference>
<accession>Q6NJ87</accession>
<organism>
    <name type="scientific">Corynebacterium diphtheriae (strain ATCC 700971 / NCTC 13129 / Biotype gravis)</name>
    <dbReference type="NCBI Taxonomy" id="257309"/>
    <lineage>
        <taxon>Bacteria</taxon>
        <taxon>Bacillati</taxon>
        <taxon>Actinomycetota</taxon>
        <taxon>Actinomycetes</taxon>
        <taxon>Mycobacteriales</taxon>
        <taxon>Corynebacteriaceae</taxon>
        <taxon>Corynebacterium</taxon>
    </lineage>
</organism>
<proteinExistence type="inferred from homology"/>
<protein>
    <recommendedName>
        <fullName evidence="1">Large ribosomal subunit protein uL6</fullName>
    </recommendedName>
    <alternativeName>
        <fullName evidence="2">50S ribosomal protein L6</fullName>
    </alternativeName>
</protein>
<name>RL6_CORDI</name>